<protein>
    <recommendedName>
        <fullName>Non-structural polyprotein pORF1</fullName>
    </recommendedName>
    <domain>
        <recommendedName>
            <fullName>Methyltransferase</fullName>
            <ecNumber evidence="3">2.1.1.-</ecNumber>
            <ecNumber evidence="4">2.7.7.-</ecNumber>
        </recommendedName>
    </domain>
    <domain>
        <recommendedName>
            <fullName>Putative protease</fullName>
            <ecNumber evidence="4">3.4.-.-</ecNumber>
        </recommendedName>
        <alternativeName>
            <fullName evidence="2">Putative papain-like cysteine protease</fullName>
            <shortName evidence="2">PCP</shortName>
        </alternativeName>
    </domain>
    <domain>
        <recommendedName>
            <fullName>NTPase/helicase</fullName>
            <ecNumber>3.6.4.-</ecNumber>
        </recommendedName>
    </domain>
    <domain>
        <recommendedName>
            <fullName>RNA-directed RNA polymerase</fullName>
            <shortName>RdRp</shortName>
            <ecNumber>2.7.7.48</ecNumber>
        </recommendedName>
    </domain>
</protein>
<sequence length="1531" mass="168040">MDVSQFAESKGVKTALEAAALAAANTALRNARVVTPYLTQQQTKNLLELFRGAQLRFEPRDNWAHPVQRVVHDALEQYVRRAAGPNCLEVGAHPRSINRHQASHRCFLPPVGRDEQRWQVAPRRGLCNLIRRALLNGVKVAREFCQLGFGACSHQCEVGIALYSLHDMRPADVACAMARHNMRTMYVVLHLPEEAMLPPGSYSNKFYNTVNTADKCIITYADDSCAGYVHKREVLQDWITTTGVSGRHPMLIERVRAIGCHFVLLCTATQPCPMPYTPYPSSNTVYVRNVYGPALGAGLFTPKCCVDATFYPVPRRVWQRLMMFGTTLDDDAFCCSRLLTYLRGISTKVTVGNIVANEGWQPEEQQLTAVAIAAYLTVCHQRWVRTQGIARGVRRLQAEHAQQFWFKVWELFTNTGTVPGYSAGFYRQLATWISGGLTIDFERRVFDKRVKCGCCCVCERRPADPGCLCIDDFPDGANGLVKLKKWPIRAGTKSAVSKWAQVRVRADSTEDLIDLSVPKLLTLKELAAAAIRKQPSAPPSLHILDRRPVGDPRRPVNCAPPAVSAGPVPAPPGNPVIESVQGSGAGGPEVSESQPGLTPTREVTNMPLPPQRGQEEVLAVLPSGARVIVGNLLDVAADWLVNPANRDHQPGGGLCGMFHRRWPHLWPVCGEVQDLPTGPVIFQQGPPKVIHAPGPDYRIKPDPDGLRRVYAVVHQAHGTVASPLISAGIYRAPARESFEAWAATARDGDLLVVQRSMAQHIRDFVLNEGRHRPRELHVDRAMADMVNYGLATEPEPYNELVKGVEVAPMTVKYALIAGVPGSGKSSSVDHRGAVVITPTKTLAREWSARGATAVTPHVAASAAPEGRVIVDEAYAIPPHLLVASLRRARDVVMLGDPHQIPALDFDGRCLTSAVDLGLQPTSWRTVSHRCPWDVCIFLRTDYPTITTTSRVLRSVVFTGETIGQKIVFTQVAKQSNPGSITVHEAQGSTFDQTTIIATLDARGLIASSRAHAIVALTRHRERCSVIDVGGVLVEIGVTDAMFNNIEMQLVRPDAAAPAGVLRAPDDTVDGLLDIPPAHTDVAAVLTAEAIGHAPLELAAINPPGPVLEQGLLYMPARLDGRDEVVKLQLSDTVHCRLAAPTSRLAVINTLVGRYGKATKLPEVEYDLMDTIAQFWHHIGPINPSTLEYAEMCEAMLSKGQDGSLIVHLDLQDADCSRITFFQKDCAKFTLDDPVAHGKVGQGISAWPKTLCALFGPWFRAIEKHLVAGLPPGYYYGDLYTEADLHRSVLCAPAGHLVFENDFSEFDSTQNNVSLDLECELMRRFGMPDWMVALYHLVRSYWLLVAPKEALRGCWKKHSGEPGTLLWNTVWNMTVLHHVYEFDRPSVLCFKGDDSVVVCESVRARPEGVSLVADCGLKMKDKTGPCGAFSNLLIFPGAGVVCDLLRQWGRLTDKNWGPDIQRMQDLEQACKDFVARVVTQGKEMLTIQLVAGYYGVEVGMVEVVWGALKACAAARETLVTNRLPVLNLSKED</sequence>
<comment type="function">
    <text evidence="4">Methyltransferase: Displays a capping enzyme activity. This function is necessary since all viral RNAs are synthesized in the cytoplasm, and host capping enzymes are restricted to the nucleus. The enzymatic reaction involves a covalent link between 7-methyl-GMP and the methyltransferase, whereas eukaryotic capping enzymes form a covalent complex only with GMP. Methyltransferase catalyzes transfer of a methyl group from S-adenosylmethionine to GTP and GDP to yield m(7)GTP or m(7)GDP. This enzyme also displays guanylyltransferase activity to form a covalent complex, methyltransferase-m(7)GMP, from which 7-methyl-GMP is transferred to the mRNA to create the cap structure.</text>
</comment>
<comment type="function">
    <text evidence="4">Y-domain: Indispensable for virus replication.</text>
</comment>
<comment type="function">
    <text evidence="4">Putative protease: The putative protease domain although necessary for replication of the virus may not be a protease but rather a structural Zn(2+)-binding domain. Inhibits induction of IFN-beta by MDA5 and RIG-I pathways and down-regulates the expression of MDA5.</text>
</comment>
<comment type="function">
    <text evidence="4">NTPase/helicase: Multi-functional protein that exhibits NTPase and RNA unwinding activities. Hydrolyzes all NTPs efficiently and unwinds RNA duplexes containing 5' overhangs. Possesses a sequence independent RNA-5'-triphosphatase (RTPase) activity suggestive of its role in forming viral cap structure. Also participates in viral genome replication, RNA translocation and genome packaging/unpackaging.</text>
</comment>
<comment type="function">
    <text evidence="4 5">RNA-directed RNA polymerase: Plays an essential role in the virus replication (By similarity). Binds to the 3'-end of the genomic RNA to initiate viral replication (By similarity).</text>
</comment>
<comment type="catalytic activity">
    <reaction evidence="8">
        <text>RNA(n) + a ribonucleoside 5'-triphosphate = RNA(n+1) + diphosphate</text>
        <dbReference type="Rhea" id="RHEA:21248"/>
        <dbReference type="Rhea" id="RHEA-COMP:14527"/>
        <dbReference type="Rhea" id="RHEA-COMP:17342"/>
        <dbReference type="ChEBI" id="CHEBI:33019"/>
        <dbReference type="ChEBI" id="CHEBI:61557"/>
        <dbReference type="ChEBI" id="CHEBI:140395"/>
        <dbReference type="EC" id="2.7.7.48"/>
    </reaction>
</comment>
<comment type="catalytic activity">
    <reaction evidence="4">
        <text>GTP + S-adenosyl-L-methionine = N(7)-methyl-GTP + S-adenosyl-L-homocysteine</text>
        <dbReference type="Rhea" id="RHEA:46948"/>
        <dbReference type="ChEBI" id="CHEBI:37565"/>
        <dbReference type="ChEBI" id="CHEBI:57856"/>
        <dbReference type="ChEBI" id="CHEBI:59789"/>
        <dbReference type="ChEBI" id="CHEBI:87133"/>
    </reaction>
    <physiologicalReaction direction="left-to-right" evidence="4">
        <dbReference type="Rhea" id="RHEA:46949"/>
    </physiologicalReaction>
</comment>
<comment type="cofactor">
    <cofactor evidence="4">
        <name>Mg(2+)</name>
        <dbReference type="ChEBI" id="CHEBI:18420"/>
    </cofactor>
    <text evidence="4">For methyltransferase activity.</text>
</comment>
<comment type="subunit">
    <text evidence="2">The protease domain interacts with host EIF2AK4 (via C-terminus); this interaction inhibits dimerization of EIF2AK4 and prevents EIF2AK4-mediated phosphorylation of host EIF2A.</text>
</comment>
<comment type="subcellular location">
    <subcellularLocation>
        <location evidence="4">Host cytoplasm</location>
    </subcellularLocation>
    <subcellularLocation>
        <location evidence="4">Host cytoplasm</location>
        <location evidence="4">Host perinuclear region</location>
    </subcellularLocation>
</comment>
<comment type="domain">
    <text evidence="4">Contains a methyltransferase domain, a Y-domain, a putative protease region, a proline-rich disordered hypervariable region (HVR), a macro domain (also called X-domain), a helicase domain and an RNA-dependent RNA polymerase domain.</text>
</comment>
<comment type="PTM">
    <text evidence="4">ORF1 polyprotein does not seem to be processed into distinct enzymatic domains by a viral protease belonging to ORF1, but could be processed by a host serine protease like thrombin.</text>
</comment>
<comment type="similarity">
    <text evidence="11">Belongs to the hepevirus non-structural polyprotein family.</text>
</comment>
<proteinExistence type="inferred from homology"/>
<organismHost>
    <name type="scientific">Gallus gallus</name>
    <name type="common">Chicken</name>
    <dbReference type="NCBI Taxonomy" id="9031"/>
</organismHost>
<gene>
    <name type="ORF">ORF1</name>
</gene>
<accession>Q6QLN1</accession>
<accession>Q913Y9</accession>
<dbReference type="EC" id="2.1.1.-" evidence="3"/>
<dbReference type="EC" id="2.7.7.-" evidence="4"/>
<dbReference type="EC" id="3.4.-.-" evidence="4"/>
<dbReference type="EC" id="3.6.4.-"/>
<dbReference type="EC" id="2.7.7.48"/>
<dbReference type="EMBL" id="AY535004">
    <property type="protein sequence ID" value="AAS45830.1"/>
    <property type="molecule type" value="Genomic_RNA"/>
</dbReference>
<dbReference type="EMBL" id="AY043166">
    <property type="protein sequence ID" value="AAL13366.1"/>
    <property type="molecule type" value="Genomic_RNA"/>
</dbReference>
<dbReference type="RefSeq" id="YP_009001465.1">
    <property type="nucleotide sequence ID" value="NC_023425.1"/>
</dbReference>
<dbReference type="SMR" id="Q6QLN1"/>
<dbReference type="KEGG" id="vg:18263429"/>
<dbReference type="Proteomes" id="UP000007439">
    <property type="component" value="Genome"/>
</dbReference>
<dbReference type="Proteomes" id="UP000139094">
    <property type="component" value="Segment"/>
</dbReference>
<dbReference type="GO" id="GO:0044220">
    <property type="term" value="C:host cell perinuclear region of cytoplasm"/>
    <property type="evidence" value="ECO:0007669"/>
    <property type="project" value="UniProtKB-SubCell"/>
</dbReference>
<dbReference type="GO" id="GO:0005524">
    <property type="term" value="F:ATP binding"/>
    <property type="evidence" value="ECO:0007669"/>
    <property type="project" value="UniProtKB-KW"/>
</dbReference>
<dbReference type="GO" id="GO:0008234">
    <property type="term" value="F:cysteine-type peptidase activity"/>
    <property type="evidence" value="ECO:0007669"/>
    <property type="project" value="UniProtKB-KW"/>
</dbReference>
<dbReference type="GO" id="GO:0004386">
    <property type="term" value="F:helicase activity"/>
    <property type="evidence" value="ECO:0007669"/>
    <property type="project" value="UniProtKB-KW"/>
</dbReference>
<dbReference type="GO" id="GO:0046872">
    <property type="term" value="F:metal ion binding"/>
    <property type="evidence" value="ECO:0007669"/>
    <property type="project" value="UniProtKB-KW"/>
</dbReference>
<dbReference type="GO" id="GO:0008174">
    <property type="term" value="F:mRNA methyltransferase activity"/>
    <property type="evidence" value="ECO:0007669"/>
    <property type="project" value="InterPro"/>
</dbReference>
<dbReference type="GO" id="GO:0003723">
    <property type="term" value="F:RNA binding"/>
    <property type="evidence" value="ECO:0007669"/>
    <property type="project" value="UniProtKB-KW"/>
</dbReference>
<dbReference type="GO" id="GO:0003968">
    <property type="term" value="F:RNA-directed RNA polymerase activity"/>
    <property type="evidence" value="ECO:0007669"/>
    <property type="project" value="UniProtKB-KW"/>
</dbReference>
<dbReference type="GO" id="GO:0006351">
    <property type="term" value="P:DNA-templated transcription"/>
    <property type="evidence" value="ECO:0007669"/>
    <property type="project" value="InterPro"/>
</dbReference>
<dbReference type="GO" id="GO:0032259">
    <property type="term" value="P:methylation"/>
    <property type="evidence" value="ECO:0007669"/>
    <property type="project" value="UniProtKB-KW"/>
</dbReference>
<dbReference type="GO" id="GO:0016556">
    <property type="term" value="P:mRNA modification"/>
    <property type="evidence" value="ECO:0007669"/>
    <property type="project" value="InterPro"/>
</dbReference>
<dbReference type="GO" id="GO:0006508">
    <property type="term" value="P:proteolysis"/>
    <property type="evidence" value="ECO:0007669"/>
    <property type="project" value="UniProtKB-KW"/>
</dbReference>
<dbReference type="GO" id="GO:0006396">
    <property type="term" value="P:RNA processing"/>
    <property type="evidence" value="ECO:0007669"/>
    <property type="project" value="InterPro"/>
</dbReference>
<dbReference type="GO" id="GO:0039694">
    <property type="term" value="P:viral RNA genome replication"/>
    <property type="evidence" value="ECO:0007669"/>
    <property type="project" value="InterPro"/>
</dbReference>
<dbReference type="CDD" id="cd23259">
    <property type="entry name" value="Hepeviridae_RdRp"/>
    <property type="match status" value="1"/>
</dbReference>
<dbReference type="CDD" id="cd21557">
    <property type="entry name" value="Macro_X_Nsp3-like"/>
    <property type="match status" value="1"/>
</dbReference>
<dbReference type="CDD" id="cd18809">
    <property type="entry name" value="SF1_C_RecD"/>
    <property type="match status" value="1"/>
</dbReference>
<dbReference type="Gene3D" id="3.40.220.10">
    <property type="entry name" value="Leucine Aminopeptidase, subunit E, domain 1"/>
    <property type="match status" value="1"/>
</dbReference>
<dbReference type="Gene3D" id="3.40.50.300">
    <property type="entry name" value="P-loop containing nucleotide triphosphate hydrolases"/>
    <property type="match status" value="2"/>
</dbReference>
<dbReference type="InterPro" id="IPR027351">
    <property type="entry name" value="(+)RNA_virus_helicase_core_dom"/>
</dbReference>
<dbReference type="InterPro" id="IPR002588">
    <property type="entry name" value="Alphavirus-like_MT_dom"/>
</dbReference>
<dbReference type="InterPro" id="IPR043502">
    <property type="entry name" value="DNA/RNA_pol_sf"/>
</dbReference>
<dbReference type="InterPro" id="IPR022202">
    <property type="entry name" value="Hepatitis-E_hinge"/>
</dbReference>
<dbReference type="InterPro" id="IPR047307">
    <property type="entry name" value="Hepeviridae_RdRp"/>
</dbReference>
<dbReference type="InterPro" id="IPR002589">
    <property type="entry name" value="Macro_dom"/>
</dbReference>
<dbReference type="InterPro" id="IPR043472">
    <property type="entry name" value="Macro_dom-like"/>
</dbReference>
<dbReference type="InterPro" id="IPR044371">
    <property type="entry name" value="Macro_X_NSP3-like"/>
</dbReference>
<dbReference type="InterPro" id="IPR027417">
    <property type="entry name" value="P-loop_NTPase"/>
</dbReference>
<dbReference type="InterPro" id="IPR001788">
    <property type="entry name" value="RNA-dep_RNA_pol_alsuvir"/>
</dbReference>
<dbReference type="InterPro" id="IPR007094">
    <property type="entry name" value="RNA-dir_pol_PSvirus"/>
</dbReference>
<dbReference type="Pfam" id="PF12526">
    <property type="entry name" value="DUF3729"/>
    <property type="match status" value="1"/>
</dbReference>
<dbReference type="Pfam" id="PF01661">
    <property type="entry name" value="Macro"/>
    <property type="match status" value="1"/>
</dbReference>
<dbReference type="Pfam" id="PF00978">
    <property type="entry name" value="RdRP_2"/>
    <property type="match status" value="1"/>
</dbReference>
<dbReference type="Pfam" id="PF01443">
    <property type="entry name" value="Viral_helicase1"/>
    <property type="match status" value="1"/>
</dbReference>
<dbReference type="Pfam" id="PF01660">
    <property type="entry name" value="Vmethyltransf"/>
    <property type="match status" value="1"/>
</dbReference>
<dbReference type="SMART" id="SM00506">
    <property type="entry name" value="A1pp"/>
    <property type="match status" value="1"/>
</dbReference>
<dbReference type="SUPFAM" id="SSF56672">
    <property type="entry name" value="DNA/RNA polymerases"/>
    <property type="match status" value="1"/>
</dbReference>
<dbReference type="SUPFAM" id="SSF52949">
    <property type="entry name" value="Macro domain-like"/>
    <property type="match status" value="1"/>
</dbReference>
<dbReference type="SUPFAM" id="SSF52540">
    <property type="entry name" value="P-loop containing nucleoside triphosphate hydrolases"/>
    <property type="match status" value="2"/>
</dbReference>
<dbReference type="PROSITE" id="PS51743">
    <property type="entry name" value="ALPHAVIRUS_MT"/>
    <property type="match status" value="1"/>
</dbReference>
<dbReference type="PROSITE" id="PS51154">
    <property type="entry name" value="MACRO"/>
    <property type="match status" value="1"/>
</dbReference>
<dbReference type="PROSITE" id="PS51657">
    <property type="entry name" value="PSRV_HELICASE"/>
    <property type="match status" value="1"/>
</dbReference>
<dbReference type="PROSITE" id="PS50507">
    <property type="entry name" value="RDRP_SSRNA_POS"/>
    <property type="match status" value="1"/>
</dbReference>
<keyword id="KW-0067">ATP-binding</keyword>
<keyword id="KW-0347">Helicase</keyword>
<keyword id="KW-1035">Host cytoplasm</keyword>
<keyword id="KW-0378">Hydrolase</keyword>
<keyword id="KW-0460">Magnesium</keyword>
<keyword id="KW-0479">Metal-binding</keyword>
<keyword id="KW-0489">Methyltransferase</keyword>
<keyword id="KW-0547">Nucleotide-binding</keyword>
<keyword id="KW-0548">Nucleotidyltransferase</keyword>
<keyword id="KW-0645">Protease</keyword>
<keyword id="KW-1185">Reference proteome</keyword>
<keyword id="KW-0694">RNA-binding</keyword>
<keyword id="KW-0696">RNA-directed RNA polymerase</keyword>
<keyword id="KW-0788">Thiol protease</keyword>
<keyword id="KW-0808">Transferase</keyword>
<keyword id="KW-0693">Viral RNA replication</keyword>
<keyword id="KW-0862">Zinc</keyword>
<evidence type="ECO:0000250" key="1"/>
<evidence type="ECO:0000250" key="2">
    <source>
        <dbReference type="UniProtKB" id="P33424"/>
    </source>
</evidence>
<evidence type="ECO:0000250" key="3">
    <source>
        <dbReference type="UniProtKB" id="Q04610"/>
    </source>
</evidence>
<evidence type="ECO:0000250" key="4">
    <source>
        <dbReference type="UniProtKB" id="Q81862"/>
    </source>
</evidence>
<evidence type="ECO:0000250" key="5">
    <source>
        <dbReference type="UniProtKB" id="Q9WC28"/>
    </source>
</evidence>
<evidence type="ECO:0000255" key="6"/>
<evidence type="ECO:0000255" key="7">
    <source>
        <dbReference type="PROSITE-ProRule" id="PRU00490"/>
    </source>
</evidence>
<evidence type="ECO:0000255" key="8">
    <source>
        <dbReference type="PROSITE-ProRule" id="PRU00539"/>
    </source>
</evidence>
<evidence type="ECO:0000255" key="9">
    <source>
        <dbReference type="PROSITE-ProRule" id="PRU01079"/>
    </source>
</evidence>
<evidence type="ECO:0000256" key="10">
    <source>
        <dbReference type="SAM" id="MobiDB-lite"/>
    </source>
</evidence>
<evidence type="ECO:0000305" key="11"/>
<reference key="1">
    <citation type="journal article" date="2004" name="J. Gen. Virol.">
        <title>Determination and analysis of the complete genomic sequence of avian hepatitis E virus (avian HEV) and attempts to infect rhesus monkeys with avian HEV.</title>
        <authorList>
            <person name="Huang F.F."/>
            <person name="Sun Z.F."/>
            <person name="Emerson S.U."/>
            <person name="Purcell R.H."/>
            <person name="Shivaprasad H.L."/>
            <person name="Pierson F.W."/>
            <person name="Toth T.E."/>
            <person name="Meng X.J."/>
        </authorList>
    </citation>
    <scope>NUCLEOTIDE SEQUENCE [GENOMIC RNA]</scope>
</reference>
<reference key="2">
    <citation type="journal article" date="2001" name="J. Gen. Virol.">
        <title>Genetic identification and characterization of a novel virus related to human hepatitis E virus from chickens with hepatitis-splenomegaly syndrome in the United States.</title>
        <authorList>
            <person name="Haqshenas G."/>
            <person name="Shivaprasad H.L."/>
            <person name="Woolcock P.R."/>
            <person name="Read D.H."/>
            <person name="Meng X.J."/>
        </authorList>
    </citation>
    <scope>NUCLEOTIDE SEQUENCE [GENOMIC RNA] OF 901-1531</scope>
</reference>
<name>POLN_AHEV</name>
<organism>
    <name type="scientific">Avian hepatitis E virus (isolate Chicken/California/Meng)</name>
    <name type="common">AHEV</name>
    <dbReference type="NCBI Taxonomy" id="516993"/>
    <lineage>
        <taxon>Viruses</taxon>
        <taxon>Riboviria</taxon>
        <taxon>Orthornavirae</taxon>
        <taxon>Kitrinoviricota</taxon>
        <taxon>Alsuviricetes</taxon>
        <taxon>Hepelivirales</taxon>
        <taxon>Hepeviridae</taxon>
        <taxon>Orthohepevirinae</taxon>
        <taxon>Avihepevirus</taxon>
        <taxon>Avihepevirus magniiecur</taxon>
    </lineage>
</organism>
<feature type="chain" id="PRO_0000334529" description="Non-structural polyprotein pORF1">
    <location>
        <begin position="1"/>
        <end position="1531"/>
    </location>
</feature>
<feature type="domain" description="Alphavirus-like MT" evidence="9">
    <location>
        <begin position="56"/>
        <end position="239"/>
    </location>
</feature>
<feature type="domain" description="Macro" evidence="7">
    <location>
        <begin position="612"/>
        <end position="761"/>
    </location>
</feature>
<feature type="domain" description="(+)RNA virus helicase ATP-binding">
    <location>
        <begin position="786"/>
        <end position="924"/>
    </location>
</feature>
<feature type="domain" description="(+)RNA virus helicase C-terminal">
    <location>
        <begin position="925"/>
        <end position="1058"/>
    </location>
</feature>
<feature type="domain" description="RdRp catalytic" evidence="8">
    <location>
        <begin position="1295"/>
        <end position="1406"/>
    </location>
</feature>
<feature type="region of interest" description="Methyltransferase" evidence="1">
    <location>
        <begin position="60"/>
        <end position="239"/>
    </location>
</feature>
<feature type="region of interest" description="Y-domain" evidence="4">
    <location>
        <begin position="240"/>
        <end position="434"/>
    </location>
</feature>
<feature type="region of interest" description="Putative protease" evidence="1">
    <location>
        <begin position="435"/>
        <end position="621"/>
    </location>
</feature>
<feature type="region of interest" description="Disordered" evidence="10">
    <location>
        <begin position="561"/>
        <end position="600"/>
    </location>
</feature>
<feature type="region of interest" description="X-domain" evidence="1">
    <location>
        <begin position="622"/>
        <end position="786"/>
    </location>
</feature>
<feature type="region of interest" description="NTPase/helicase" evidence="1">
    <location>
        <begin position="803"/>
        <end position="1046"/>
    </location>
</feature>
<feature type="region of interest" description="RNA-directed RNA polymerase" evidence="1">
    <location>
        <begin position="1049"/>
        <end position="1531"/>
    </location>
</feature>
<feature type="compositionally biased region" description="Polar residues" evidence="10">
    <location>
        <begin position="591"/>
        <end position="600"/>
    </location>
</feature>
<feature type="binding site" evidence="6">
    <location>
        <begin position="818"/>
        <end position="825"/>
    </location>
    <ligand>
        <name>ATP</name>
        <dbReference type="ChEBI" id="CHEBI:30616"/>
    </ligand>
</feature>